<name>ARGB_SALG2</name>
<gene>
    <name evidence="1" type="primary">argB</name>
    <name type="ordered locus">SG3293</name>
</gene>
<comment type="function">
    <text evidence="1">Catalyzes the ATP-dependent phosphorylation of N-acetyl-L-glutamate.</text>
</comment>
<comment type="catalytic activity">
    <reaction evidence="1">
        <text>N-acetyl-L-glutamate + ATP = N-acetyl-L-glutamyl 5-phosphate + ADP</text>
        <dbReference type="Rhea" id="RHEA:14629"/>
        <dbReference type="ChEBI" id="CHEBI:30616"/>
        <dbReference type="ChEBI" id="CHEBI:44337"/>
        <dbReference type="ChEBI" id="CHEBI:57936"/>
        <dbReference type="ChEBI" id="CHEBI:456216"/>
        <dbReference type="EC" id="2.7.2.8"/>
    </reaction>
</comment>
<comment type="pathway">
    <text evidence="1">Amino-acid biosynthesis; L-arginine biosynthesis; N(2)-acetyl-L-ornithine from L-glutamate: step 2/4.</text>
</comment>
<comment type="subunit">
    <text evidence="1">Homodimer.</text>
</comment>
<comment type="subcellular location">
    <subcellularLocation>
        <location evidence="1">Cytoplasm</location>
    </subcellularLocation>
</comment>
<comment type="similarity">
    <text evidence="1">Belongs to the acetylglutamate kinase family. ArgB subfamily.</text>
</comment>
<keyword id="KW-0028">Amino-acid biosynthesis</keyword>
<keyword id="KW-0055">Arginine biosynthesis</keyword>
<keyword id="KW-0067">ATP-binding</keyword>
<keyword id="KW-0963">Cytoplasm</keyword>
<keyword id="KW-0418">Kinase</keyword>
<keyword id="KW-0547">Nucleotide-binding</keyword>
<keyword id="KW-0808">Transferase</keyword>
<feature type="chain" id="PRO_1000092881" description="Acetylglutamate kinase">
    <location>
        <begin position="1"/>
        <end position="258"/>
    </location>
</feature>
<feature type="binding site" evidence="1">
    <location>
        <begin position="44"/>
        <end position="45"/>
    </location>
    <ligand>
        <name>substrate</name>
    </ligand>
</feature>
<feature type="binding site" evidence="1">
    <location>
        <position position="66"/>
    </location>
    <ligand>
        <name>substrate</name>
    </ligand>
</feature>
<feature type="binding site" evidence="1">
    <location>
        <position position="158"/>
    </location>
    <ligand>
        <name>substrate</name>
    </ligand>
</feature>
<feature type="binding site" evidence="1">
    <location>
        <begin position="181"/>
        <end position="186"/>
    </location>
    <ligand>
        <name>ATP</name>
        <dbReference type="ChEBI" id="CHEBI:30616"/>
    </ligand>
</feature>
<feature type="binding site" evidence="1">
    <location>
        <begin position="209"/>
        <end position="211"/>
    </location>
    <ligand>
        <name>ATP</name>
        <dbReference type="ChEBI" id="CHEBI:30616"/>
    </ligand>
</feature>
<feature type="site" description="Transition state stabilizer" evidence="1">
    <location>
        <position position="8"/>
    </location>
</feature>
<feature type="site" description="Transition state stabilizer" evidence="1">
    <location>
        <position position="217"/>
    </location>
</feature>
<organism>
    <name type="scientific">Salmonella gallinarum (strain 287/91 / NCTC 13346)</name>
    <dbReference type="NCBI Taxonomy" id="550538"/>
    <lineage>
        <taxon>Bacteria</taxon>
        <taxon>Pseudomonadati</taxon>
        <taxon>Pseudomonadota</taxon>
        <taxon>Gammaproteobacteria</taxon>
        <taxon>Enterobacterales</taxon>
        <taxon>Enterobacteriaceae</taxon>
        <taxon>Salmonella</taxon>
    </lineage>
</organism>
<dbReference type="EC" id="2.7.2.8" evidence="1"/>
<dbReference type="EMBL" id="AM933173">
    <property type="protein sequence ID" value="CAR39089.1"/>
    <property type="molecule type" value="Genomic_DNA"/>
</dbReference>
<dbReference type="RefSeq" id="WP_001575262.1">
    <property type="nucleotide sequence ID" value="NC_011274.1"/>
</dbReference>
<dbReference type="SMR" id="B5RF46"/>
<dbReference type="KEGG" id="seg:SG3293"/>
<dbReference type="HOGENOM" id="CLU_053680_1_1_6"/>
<dbReference type="UniPathway" id="UPA00068">
    <property type="reaction ID" value="UER00107"/>
</dbReference>
<dbReference type="Proteomes" id="UP000008321">
    <property type="component" value="Chromosome"/>
</dbReference>
<dbReference type="GO" id="GO:0005737">
    <property type="term" value="C:cytoplasm"/>
    <property type="evidence" value="ECO:0007669"/>
    <property type="project" value="UniProtKB-SubCell"/>
</dbReference>
<dbReference type="GO" id="GO:0003991">
    <property type="term" value="F:acetylglutamate kinase activity"/>
    <property type="evidence" value="ECO:0007669"/>
    <property type="project" value="UniProtKB-UniRule"/>
</dbReference>
<dbReference type="GO" id="GO:0005524">
    <property type="term" value="F:ATP binding"/>
    <property type="evidence" value="ECO:0007669"/>
    <property type="project" value="UniProtKB-UniRule"/>
</dbReference>
<dbReference type="GO" id="GO:0042450">
    <property type="term" value="P:arginine biosynthetic process via ornithine"/>
    <property type="evidence" value="ECO:0007669"/>
    <property type="project" value="UniProtKB-UniRule"/>
</dbReference>
<dbReference type="GO" id="GO:0006526">
    <property type="term" value="P:L-arginine biosynthetic process"/>
    <property type="evidence" value="ECO:0007669"/>
    <property type="project" value="UniProtKB-UniPathway"/>
</dbReference>
<dbReference type="CDD" id="cd04249">
    <property type="entry name" value="AAK_NAGK-NC"/>
    <property type="match status" value="1"/>
</dbReference>
<dbReference type="FunFam" id="3.40.1160.10:FF:000008">
    <property type="entry name" value="Acetylglutamate kinase"/>
    <property type="match status" value="1"/>
</dbReference>
<dbReference type="Gene3D" id="3.40.1160.10">
    <property type="entry name" value="Acetylglutamate kinase-like"/>
    <property type="match status" value="1"/>
</dbReference>
<dbReference type="HAMAP" id="MF_00082">
    <property type="entry name" value="ArgB"/>
    <property type="match status" value="1"/>
</dbReference>
<dbReference type="InterPro" id="IPR036393">
    <property type="entry name" value="AceGlu_kinase-like_sf"/>
</dbReference>
<dbReference type="InterPro" id="IPR004662">
    <property type="entry name" value="AcgluKinase_fam"/>
</dbReference>
<dbReference type="InterPro" id="IPR037528">
    <property type="entry name" value="ArgB"/>
</dbReference>
<dbReference type="InterPro" id="IPR001048">
    <property type="entry name" value="Asp/Glu/Uridylate_kinase"/>
</dbReference>
<dbReference type="InterPro" id="IPR041731">
    <property type="entry name" value="NAGK-NC"/>
</dbReference>
<dbReference type="NCBIfam" id="TIGR00761">
    <property type="entry name" value="argB"/>
    <property type="match status" value="1"/>
</dbReference>
<dbReference type="PANTHER" id="PTHR23342">
    <property type="entry name" value="N-ACETYLGLUTAMATE SYNTHASE"/>
    <property type="match status" value="1"/>
</dbReference>
<dbReference type="PANTHER" id="PTHR23342:SF0">
    <property type="entry name" value="N-ACETYLGLUTAMATE SYNTHASE, MITOCHONDRIAL"/>
    <property type="match status" value="1"/>
</dbReference>
<dbReference type="Pfam" id="PF00696">
    <property type="entry name" value="AA_kinase"/>
    <property type="match status" value="1"/>
</dbReference>
<dbReference type="PIRSF" id="PIRSF000728">
    <property type="entry name" value="NAGK"/>
    <property type="match status" value="1"/>
</dbReference>
<dbReference type="SUPFAM" id="SSF53633">
    <property type="entry name" value="Carbamate kinase-like"/>
    <property type="match status" value="1"/>
</dbReference>
<protein>
    <recommendedName>
        <fullName evidence="1">Acetylglutamate kinase</fullName>
        <ecNumber evidence="1">2.7.2.8</ecNumber>
    </recommendedName>
    <alternativeName>
        <fullName evidence="1">N-acetyl-L-glutamate 5-phosphotransferase</fullName>
    </alternativeName>
    <alternativeName>
        <fullName evidence="1">NAG kinase</fullName>
        <shortName evidence="1">NAGK</shortName>
    </alternativeName>
</protein>
<proteinExistence type="inferred from homology"/>
<sequence>MMNPLIIKLGGVLLDSEEALERLFTALVNYRESHQRPLVIVHGGGCVVDELMKGLNLPVKKKDGLRVTPADQIGIITGALAGTANKTLLAWAKKHHIASVGLFLGDGDSVNVTQLDEALGHVGLAQPGSPKLINMLLENGFLPVVSSIGVTDDGQLMNVNADQAATALAATLGADLILLSDVSGILDGKGQRIAEMTASKAEQLIDQGIITDGMIVKVNAALDAARALGRPVDIASWRHAEQLPALFNGTPIGTRILA</sequence>
<accession>B5RF46</accession>
<reference key="1">
    <citation type="journal article" date="2008" name="Genome Res.">
        <title>Comparative genome analysis of Salmonella enteritidis PT4 and Salmonella gallinarum 287/91 provides insights into evolutionary and host adaptation pathways.</title>
        <authorList>
            <person name="Thomson N.R."/>
            <person name="Clayton D.J."/>
            <person name="Windhorst D."/>
            <person name="Vernikos G."/>
            <person name="Davidson S."/>
            <person name="Churcher C."/>
            <person name="Quail M.A."/>
            <person name="Stevens M."/>
            <person name="Jones M.A."/>
            <person name="Watson M."/>
            <person name="Barron A."/>
            <person name="Layton A."/>
            <person name="Pickard D."/>
            <person name="Kingsley R.A."/>
            <person name="Bignell A."/>
            <person name="Clark L."/>
            <person name="Harris B."/>
            <person name="Ormond D."/>
            <person name="Abdellah Z."/>
            <person name="Brooks K."/>
            <person name="Cherevach I."/>
            <person name="Chillingworth T."/>
            <person name="Woodward J."/>
            <person name="Norberczak H."/>
            <person name="Lord A."/>
            <person name="Arrowsmith C."/>
            <person name="Jagels K."/>
            <person name="Moule S."/>
            <person name="Mungall K."/>
            <person name="Saunders M."/>
            <person name="Whitehead S."/>
            <person name="Chabalgoity J.A."/>
            <person name="Maskell D."/>
            <person name="Humphreys T."/>
            <person name="Roberts M."/>
            <person name="Barrow P.A."/>
            <person name="Dougan G."/>
            <person name="Parkhill J."/>
        </authorList>
    </citation>
    <scope>NUCLEOTIDE SEQUENCE [LARGE SCALE GENOMIC DNA]</scope>
    <source>
        <strain>287/91 / NCTC 13346</strain>
    </source>
</reference>
<evidence type="ECO:0000255" key="1">
    <source>
        <dbReference type="HAMAP-Rule" id="MF_00082"/>
    </source>
</evidence>